<gene>
    <name evidence="1" type="primary">hrcA</name>
    <name type="ordered locus">tll0761</name>
</gene>
<proteinExistence type="inferred from homology"/>
<reference key="1">
    <citation type="journal article" date="2002" name="DNA Res.">
        <title>Complete genome structure of the thermophilic cyanobacterium Thermosynechococcus elongatus BP-1.</title>
        <authorList>
            <person name="Nakamura Y."/>
            <person name="Kaneko T."/>
            <person name="Sato S."/>
            <person name="Ikeuchi M."/>
            <person name="Katoh H."/>
            <person name="Sasamoto S."/>
            <person name="Watanabe A."/>
            <person name="Iriguchi M."/>
            <person name="Kawashima K."/>
            <person name="Kimura T."/>
            <person name="Kishida Y."/>
            <person name="Kiyokawa C."/>
            <person name="Kohara M."/>
            <person name="Matsumoto M."/>
            <person name="Matsuno A."/>
            <person name="Nakazaki N."/>
            <person name="Shimpo S."/>
            <person name="Sugimoto M."/>
            <person name="Takeuchi C."/>
            <person name="Yamada M."/>
            <person name="Tabata S."/>
        </authorList>
    </citation>
    <scope>NUCLEOTIDE SEQUENCE [LARGE SCALE GENOMIC DNA]</scope>
    <source>
        <strain>NIES-2133 / IAM M-273 / BP-1</strain>
    </source>
</reference>
<keyword id="KW-1185">Reference proteome</keyword>
<keyword id="KW-0678">Repressor</keyword>
<keyword id="KW-0346">Stress response</keyword>
<keyword id="KW-0804">Transcription</keyword>
<keyword id="KW-0805">Transcription regulation</keyword>
<sequence>MTIELSDRQKQILGATINHYIATAEPVASKAIATEYNLNVSPATVRNTMLLLEKSGLLYQPHTSAGRVPSDSGYRVYVDELIQPIPDIARKAESLLSERFIWRQQRLEVILRQAAQLLSDLSGYITLITLPNALERQIRVIQLVALDSQQVMVILVLDTYETQSALIQLEQGEEDPELRERTLQVLTNFLNHQLQGRSLVELSAIDWQKLDLEFQTYSQQLQALLRQLRDRYSHQGTAFVISGLADLLQQPEFSQVEQVQMLLHLLEDQQDQLAPLITTDSQAPSQVQIRIGSENTLAPMQCCTLVYSCYCYGDSPVGSIGILGPTRMPYARIIPLVATAADYLTEQVSCRR</sequence>
<accession>Q8DKU4</accession>
<feature type="chain" id="PRO_0000182547" description="Heat-inducible transcription repressor HrcA">
    <location>
        <begin position="1"/>
        <end position="352"/>
    </location>
</feature>
<organism>
    <name type="scientific">Thermosynechococcus vestitus (strain NIES-2133 / IAM M-273 / BP-1)</name>
    <dbReference type="NCBI Taxonomy" id="197221"/>
    <lineage>
        <taxon>Bacteria</taxon>
        <taxon>Bacillati</taxon>
        <taxon>Cyanobacteriota</taxon>
        <taxon>Cyanophyceae</taxon>
        <taxon>Acaryochloridales</taxon>
        <taxon>Thermosynechococcaceae</taxon>
        <taxon>Thermosynechococcus</taxon>
    </lineage>
</organism>
<protein>
    <recommendedName>
        <fullName evidence="1">Heat-inducible transcription repressor HrcA</fullName>
    </recommendedName>
</protein>
<comment type="function">
    <text evidence="1">Negative regulator of class I heat shock genes (grpE-dnaK-dnaJ and groELS operons). Prevents heat-shock induction of these operons.</text>
</comment>
<comment type="similarity">
    <text evidence="1">Belongs to the HrcA family.</text>
</comment>
<dbReference type="EMBL" id="BA000039">
    <property type="protein sequence ID" value="BAC08312.1"/>
    <property type="molecule type" value="Genomic_DNA"/>
</dbReference>
<dbReference type="RefSeq" id="NP_681550.1">
    <property type="nucleotide sequence ID" value="NC_004113.1"/>
</dbReference>
<dbReference type="RefSeq" id="WP_011056606.1">
    <property type="nucleotide sequence ID" value="NC_004113.1"/>
</dbReference>
<dbReference type="SMR" id="Q8DKU4"/>
<dbReference type="STRING" id="197221.gene:10747352"/>
<dbReference type="EnsemblBacteria" id="BAC08312">
    <property type="protein sequence ID" value="BAC08312"/>
    <property type="gene ID" value="BAC08312"/>
</dbReference>
<dbReference type="KEGG" id="tel:tll0761"/>
<dbReference type="PATRIC" id="fig|197221.4.peg.800"/>
<dbReference type="eggNOG" id="COG1420">
    <property type="taxonomic scope" value="Bacteria"/>
</dbReference>
<dbReference type="Proteomes" id="UP000000440">
    <property type="component" value="Chromosome"/>
</dbReference>
<dbReference type="GO" id="GO:0003677">
    <property type="term" value="F:DNA binding"/>
    <property type="evidence" value="ECO:0007669"/>
    <property type="project" value="InterPro"/>
</dbReference>
<dbReference type="GO" id="GO:0045892">
    <property type="term" value="P:negative regulation of DNA-templated transcription"/>
    <property type="evidence" value="ECO:0007669"/>
    <property type="project" value="UniProtKB-UniRule"/>
</dbReference>
<dbReference type="Gene3D" id="3.30.450.40">
    <property type="match status" value="1"/>
</dbReference>
<dbReference type="Gene3D" id="3.30.390.60">
    <property type="entry name" value="Heat-inducible transcription repressor hrca homolog, domain 3"/>
    <property type="match status" value="1"/>
</dbReference>
<dbReference type="Gene3D" id="1.10.10.10">
    <property type="entry name" value="Winged helix-like DNA-binding domain superfamily/Winged helix DNA-binding domain"/>
    <property type="match status" value="1"/>
</dbReference>
<dbReference type="HAMAP" id="MF_00081">
    <property type="entry name" value="HrcA"/>
    <property type="match status" value="1"/>
</dbReference>
<dbReference type="InterPro" id="IPR029016">
    <property type="entry name" value="GAF-like_dom_sf"/>
</dbReference>
<dbReference type="InterPro" id="IPR002571">
    <property type="entry name" value="HrcA"/>
</dbReference>
<dbReference type="InterPro" id="IPR021153">
    <property type="entry name" value="HrcA_C"/>
</dbReference>
<dbReference type="InterPro" id="IPR036388">
    <property type="entry name" value="WH-like_DNA-bd_sf"/>
</dbReference>
<dbReference type="InterPro" id="IPR036390">
    <property type="entry name" value="WH_DNA-bd_sf"/>
</dbReference>
<dbReference type="InterPro" id="IPR005104">
    <property type="entry name" value="WHTH_HrcA_DNA-bd"/>
</dbReference>
<dbReference type="InterPro" id="IPR023120">
    <property type="entry name" value="WHTH_transcript_rep_HrcA_IDD"/>
</dbReference>
<dbReference type="NCBIfam" id="TIGR00331">
    <property type="entry name" value="hrcA"/>
    <property type="match status" value="1"/>
</dbReference>
<dbReference type="PANTHER" id="PTHR34824">
    <property type="entry name" value="HEAT-INDUCIBLE TRANSCRIPTION REPRESSOR HRCA"/>
    <property type="match status" value="1"/>
</dbReference>
<dbReference type="PANTHER" id="PTHR34824:SF1">
    <property type="entry name" value="HEAT-INDUCIBLE TRANSCRIPTION REPRESSOR HRCA"/>
    <property type="match status" value="1"/>
</dbReference>
<dbReference type="Pfam" id="PF01628">
    <property type="entry name" value="HrcA"/>
    <property type="match status" value="1"/>
</dbReference>
<dbReference type="Pfam" id="PF03444">
    <property type="entry name" value="HrcA_DNA-bdg"/>
    <property type="match status" value="1"/>
</dbReference>
<dbReference type="PIRSF" id="PIRSF005485">
    <property type="entry name" value="HrcA"/>
    <property type="match status" value="1"/>
</dbReference>
<dbReference type="SUPFAM" id="SSF55781">
    <property type="entry name" value="GAF domain-like"/>
    <property type="match status" value="1"/>
</dbReference>
<dbReference type="SUPFAM" id="SSF46785">
    <property type="entry name" value="Winged helix' DNA-binding domain"/>
    <property type="match status" value="1"/>
</dbReference>
<evidence type="ECO:0000255" key="1">
    <source>
        <dbReference type="HAMAP-Rule" id="MF_00081"/>
    </source>
</evidence>
<name>HRCA_THEVB</name>